<proteinExistence type="evidence at protein level"/>
<accession>Q9EQ14</accession>
<dbReference type="EMBL" id="AF301619">
    <property type="protein sequence ID" value="AAG37231.1"/>
    <property type="molecule type" value="mRNA"/>
</dbReference>
<dbReference type="EMBL" id="BC019953">
    <property type="protein sequence ID" value="AAH19953.1"/>
    <property type="molecule type" value="mRNA"/>
</dbReference>
<dbReference type="CCDS" id="CCDS24270.1"/>
<dbReference type="RefSeq" id="NP_112542.1">
    <property type="nucleotide sequence ID" value="NM_031252.2"/>
</dbReference>
<dbReference type="SMR" id="Q9EQ14"/>
<dbReference type="ComplexPortal" id="CPX-3293">
    <property type="entry name" value="Interleukin-23 complex"/>
</dbReference>
<dbReference type="ComplexPortal" id="CPX-389">
    <property type="entry name" value="Interleukin-23-receptor complex"/>
</dbReference>
<dbReference type="FunCoup" id="Q9EQ14">
    <property type="interactions" value="380"/>
</dbReference>
<dbReference type="IntAct" id="Q9EQ14">
    <property type="interactions" value="2"/>
</dbReference>
<dbReference type="STRING" id="10090.ENSMUSP00000026449"/>
<dbReference type="PaxDb" id="10090-ENSMUSP00000026449"/>
<dbReference type="ProteomicsDB" id="267234"/>
<dbReference type="Antibodypedia" id="803">
    <property type="antibodies" value="880 antibodies from 42 providers"/>
</dbReference>
<dbReference type="DNASU" id="83430"/>
<dbReference type="Ensembl" id="ENSMUST00000026449.3">
    <property type="protein sequence ID" value="ENSMUSP00000026449.2"/>
    <property type="gene ID" value="ENSMUSG00000025383.3"/>
</dbReference>
<dbReference type="GeneID" id="83430"/>
<dbReference type="KEGG" id="mmu:83430"/>
<dbReference type="UCSC" id="uc007hmc.1">
    <property type="organism name" value="mouse"/>
</dbReference>
<dbReference type="AGR" id="MGI:1932410"/>
<dbReference type="CTD" id="51561"/>
<dbReference type="MGI" id="MGI:1932410">
    <property type="gene designation" value="Il23a"/>
</dbReference>
<dbReference type="VEuPathDB" id="HostDB:ENSMUSG00000025383"/>
<dbReference type="eggNOG" id="ENOG502STAQ">
    <property type="taxonomic scope" value="Eukaryota"/>
</dbReference>
<dbReference type="GeneTree" id="ENSGT00390000006482"/>
<dbReference type="HOGENOM" id="CLU_122915_0_0_1"/>
<dbReference type="InParanoid" id="Q9EQ14"/>
<dbReference type="OMA" id="IRCSDAC"/>
<dbReference type="OrthoDB" id="9447007at2759"/>
<dbReference type="PhylomeDB" id="Q9EQ14"/>
<dbReference type="TreeFam" id="TF337234"/>
<dbReference type="Reactome" id="R-MMU-9020933">
    <property type="pathway name" value="Interleukin-23 signaling"/>
</dbReference>
<dbReference type="BioGRID-ORCS" id="83430">
    <property type="hits" value="2 hits in 79 CRISPR screens"/>
</dbReference>
<dbReference type="PRO" id="PR:Q9EQ14"/>
<dbReference type="Proteomes" id="UP000000589">
    <property type="component" value="Chromosome 10"/>
</dbReference>
<dbReference type="RNAct" id="Q9EQ14">
    <property type="molecule type" value="protein"/>
</dbReference>
<dbReference type="Bgee" id="ENSMUSG00000025383">
    <property type="expression patterns" value="Expressed in secondary oocyte and 20 other cell types or tissues"/>
</dbReference>
<dbReference type="GO" id="GO:0005576">
    <property type="term" value="C:extracellular region"/>
    <property type="evidence" value="ECO:0000304"/>
    <property type="project" value="Reactome"/>
</dbReference>
<dbReference type="GO" id="GO:0005615">
    <property type="term" value="C:extracellular space"/>
    <property type="evidence" value="ECO:0000314"/>
    <property type="project" value="MGI"/>
</dbReference>
<dbReference type="GO" id="GO:0070743">
    <property type="term" value="C:interleukin-23 complex"/>
    <property type="evidence" value="ECO:0000314"/>
    <property type="project" value="BHF-UCL"/>
</dbReference>
<dbReference type="GO" id="GO:0005125">
    <property type="term" value="F:cytokine activity"/>
    <property type="evidence" value="ECO:0007669"/>
    <property type="project" value="UniProtKB-KW"/>
</dbReference>
<dbReference type="GO" id="GO:0045519">
    <property type="term" value="F:interleukin-23 receptor binding"/>
    <property type="evidence" value="ECO:0007669"/>
    <property type="project" value="Ensembl"/>
</dbReference>
<dbReference type="GO" id="GO:0007259">
    <property type="term" value="P:cell surface receptor signaling pathway via JAK-STAT"/>
    <property type="evidence" value="ECO:0007669"/>
    <property type="project" value="Ensembl"/>
</dbReference>
<dbReference type="GO" id="GO:0050829">
    <property type="term" value="P:defense response to Gram-negative bacterium"/>
    <property type="evidence" value="ECO:0007669"/>
    <property type="project" value="Ensembl"/>
</dbReference>
<dbReference type="GO" id="GO:0051607">
    <property type="term" value="P:defense response to virus"/>
    <property type="evidence" value="ECO:0007669"/>
    <property type="project" value="UniProtKB-KW"/>
</dbReference>
<dbReference type="GO" id="GO:0006954">
    <property type="term" value="P:inflammatory response"/>
    <property type="evidence" value="ECO:0007669"/>
    <property type="project" value="UniProtKB-KW"/>
</dbReference>
<dbReference type="GO" id="GO:0045087">
    <property type="term" value="P:innate immune response"/>
    <property type="evidence" value="ECO:0007669"/>
    <property type="project" value="UniProtKB-KW"/>
</dbReference>
<dbReference type="GO" id="GO:0032693">
    <property type="term" value="P:negative regulation of interleukin-10 production"/>
    <property type="evidence" value="ECO:0007669"/>
    <property type="project" value="Ensembl"/>
</dbReference>
<dbReference type="GO" id="GO:0042104">
    <property type="term" value="P:positive regulation of activated T cell proliferation"/>
    <property type="evidence" value="ECO:0007669"/>
    <property type="project" value="Ensembl"/>
</dbReference>
<dbReference type="GO" id="GO:0002230">
    <property type="term" value="P:positive regulation of defense response to virus by host"/>
    <property type="evidence" value="ECO:0000314"/>
    <property type="project" value="BHF-UCL"/>
</dbReference>
<dbReference type="GO" id="GO:0032725">
    <property type="term" value="P:positive regulation of granulocyte macrophage colony-stimulating factor production"/>
    <property type="evidence" value="ECO:0007669"/>
    <property type="project" value="Ensembl"/>
</dbReference>
<dbReference type="GO" id="GO:0032733">
    <property type="term" value="P:positive regulation of interleukin-10 production"/>
    <property type="evidence" value="ECO:0007669"/>
    <property type="project" value="Ensembl"/>
</dbReference>
<dbReference type="GO" id="GO:0032735">
    <property type="term" value="P:positive regulation of interleukin-12 production"/>
    <property type="evidence" value="ECO:0007669"/>
    <property type="project" value="Ensembl"/>
</dbReference>
<dbReference type="GO" id="GO:0032740">
    <property type="term" value="P:positive regulation of interleukin-17 production"/>
    <property type="evidence" value="ECO:0007669"/>
    <property type="project" value="Ensembl"/>
</dbReference>
<dbReference type="GO" id="GO:0043382">
    <property type="term" value="P:positive regulation of memory T cell differentiation"/>
    <property type="evidence" value="ECO:0000314"/>
    <property type="project" value="BHF-UCL"/>
</dbReference>
<dbReference type="GO" id="GO:0032819">
    <property type="term" value="P:positive regulation of natural killer cell proliferation"/>
    <property type="evidence" value="ECO:0007669"/>
    <property type="project" value="Ensembl"/>
</dbReference>
<dbReference type="GO" id="GO:0090023">
    <property type="term" value="P:positive regulation of neutrophil chemotaxis"/>
    <property type="evidence" value="ECO:0000314"/>
    <property type="project" value="BHF-UCL"/>
</dbReference>
<dbReference type="GO" id="GO:0051142">
    <property type="term" value="P:positive regulation of NK T cell proliferation"/>
    <property type="evidence" value="ECO:0007669"/>
    <property type="project" value="Ensembl"/>
</dbReference>
<dbReference type="GO" id="GO:0045672">
    <property type="term" value="P:positive regulation of osteoclast differentiation"/>
    <property type="evidence" value="ECO:0007669"/>
    <property type="project" value="Ensembl"/>
</dbReference>
<dbReference type="GO" id="GO:0001916">
    <property type="term" value="P:positive regulation of T cell mediated cytotoxicity"/>
    <property type="evidence" value="ECO:0000314"/>
    <property type="project" value="BHF-UCL"/>
</dbReference>
<dbReference type="GO" id="GO:0002827">
    <property type="term" value="P:positive regulation of T-helper 1 type immune response"/>
    <property type="evidence" value="ECO:0000314"/>
    <property type="project" value="BHF-UCL"/>
</dbReference>
<dbReference type="GO" id="GO:2000330">
    <property type="term" value="P:positive regulation of T-helper 17 cell lineage commitment"/>
    <property type="evidence" value="ECO:0000314"/>
    <property type="project" value="BHF-UCL"/>
</dbReference>
<dbReference type="GO" id="GO:2000318">
    <property type="term" value="P:positive regulation of T-helper 17 type immune response"/>
    <property type="evidence" value="ECO:0000314"/>
    <property type="project" value="BHF-UCL"/>
</dbReference>
<dbReference type="GO" id="GO:0045944">
    <property type="term" value="P:positive regulation of transcription by RNA polymerase II"/>
    <property type="evidence" value="ECO:0000316"/>
    <property type="project" value="MGI"/>
</dbReference>
<dbReference type="GO" id="GO:0032760">
    <property type="term" value="P:positive regulation of tumor necrosis factor production"/>
    <property type="evidence" value="ECO:0007669"/>
    <property type="project" value="Ensembl"/>
</dbReference>
<dbReference type="GO" id="GO:0032729">
    <property type="term" value="P:positive regulation of type II interferon production"/>
    <property type="evidence" value="ECO:0007669"/>
    <property type="project" value="Ensembl"/>
</dbReference>
<dbReference type="GO" id="GO:0042098">
    <property type="term" value="P:T cell proliferation"/>
    <property type="evidence" value="ECO:0000314"/>
    <property type="project" value="MGI"/>
</dbReference>
<dbReference type="GO" id="GO:0048771">
    <property type="term" value="P:tissue remodeling"/>
    <property type="evidence" value="ECO:0007669"/>
    <property type="project" value="UniProtKB-KW"/>
</dbReference>
<dbReference type="FunFam" id="1.20.1250.10:FF:000024">
    <property type="entry name" value="Interleukin-23 subunit alpha"/>
    <property type="match status" value="1"/>
</dbReference>
<dbReference type="Gene3D" id="1.20.1250.10">
    <property type="match status" value="1"/>
</dbReference>
<dbReference type="InterPro" id="IPR009079">
    <property type="entry name" value="4_helix_cytokine-like_core"/>
</dbReference>
<dbReference type="InterPro" id="IPR010831">
    <property type="entry name" value="IL-23_alpha"/>
</dbReference>
<dbReference type="PANTHER" id="PTHR15947:SF0">
    <property type="entry name" value="INTERLEUKIN-23 SUBUNIT ALPHA"/>
    <property type="match status" value="1"/>
</dbReference>
<dbReference type="PANTHER" id="PTHR15947">
    <property type="entry name" value="SGRF"/>
    <property type="match status" value="1"/>
</dbReference>
<dbReference type="Pfam" id="PF16649">
    <property type="entry name" value="IL23"/>
    <property type="match status" value="1"/>
</dbReference>
<dbReference type="SUPFAM" id="SSF47266">
    <property type="entry name" value="4-helical cytokines"/>
    <property type="match status" value="1"/>
</dbReference>
<reference key="1">
    <citation type="journal article" date="2000" name="Immunity">
        <title>Novel p19 protein engages IL-12p40 to form a cytokine, IL-23, with biological activities similar as well as distinct from IL-12.</title>
        <authorList>
            <person name="Oppmann B."/>
            <person name="Lesley R."/>
            <person name="Blom B."/>
            <person name="Timans J.C."/>
            <person name="Xu Y."/>
            <person name="Hunte B."/>
            <person name="Vega F."/>
            <person name="Yu N."/>
            <person name="Wang J."/>
            <person name="Singh K.P."/>
            <person name="Zonin F."/>
            <person name="Vaisberg E."/>
            <person name="Churakova T."/>
            <person name="Liu M.-R."/>
            <person name="Gorman D."/>
            <person name="Wagner J."/>
            <person name="Zurawski S."/>
            <person name="Liu Y.-J."/>
            <person name="Abrams J.S."/>
            <person name="Moore K.W."/>
            <person name="Rennick D.M."/>
            <person name="de Waal-Malefyt R."/>
            <person name="Hannum C."/>
            <person name="Bazan J.F."/>
            <person name="Kastelein R.A."/>
        </authorList>
    </citation>
    <scope>NUCLEOTIDE SEQUENCE [MRNA]</scope>
    <scope>FUNCTION</scope>
    <scope>INTERACTION WITH IL12B</scope>
    <scope>SUBCELLULAR LOCATION</scope>
    <scope>TISSUE SPECIFICITY</scope>
    <source>
        <tissue>Monocyte</tissue>
    </source>
</reference>
<reference key="2">
    <citation type="journal article" date="2004" name="Genome Res.">
        <title>The status, quality, and expansion of the NIH full-length cDNA project: the Mammalian Gene Collection (MGC).</title>
        <authorList>
            <consortium name="The MGC Project Team"/>
        </authorList>
    </citation>
    <scope>NUCLEOTIDE SEQUENCE [LARGE SCALE MRNA]</scope>
    <source>
        <strain>FVB/N</strain>
        <tissue>Mammary tumor</tissue>
    </source>
</reference>
<reference key="3">
    <citation type="journal article" date="2001" name="J. Immunol.">
        <title>Ubiquitous transgenic expression of the IL-23 subunit p19 induces multiorgan inflammation, runting, infertility, and premature death.</title>
        <authorList>
            <person name="Wiekowski M.T."/>
            <person name="Leach M.W."/>
            <person name="Evans E.W."/>
            <person name="Sullivan L."/>
            <person name="Chen S.-C."/>
            <person name="Vassileva G."/>
            <person name="Bazan J.F."/>
            <person name="Gorman D.M."/>
            <person name="Kastelein R.A."/>
            <person name="Narula S."/>
            <person name="Lira S.A."/>
        </authorList>
    </citation>
    <scope>FUNCTION</scope>
</reference>
<reference key="4">
    <citation type="journal article" date="2002" name="J. Immunol.">
        <title>Mice lacking bioactive IL-12 can generate protective, antigen-specific cellular responses to mycobacterial infection only if the IL-12 p40 subunit is present.</title>
        <authorList>
            <person name="Cooper A.M."/>
            <person name="Kipnis A."/>
            <person name="Turner J."/>
            <person name="Magram J."/>
            <person name="Ferrante J."/>
            <person name="Orme I.M."/>
        </authorList>
    </citation>
    <scope>INDUCTION BY MYCOBACTERIAL INFECTION</scope>
</reference>
<reference key="5">
    <citation type="journal article" date="2002" name="J. Interferon Cytokine Res.">
        <title>Herpes simplex virus type 1 infection induces upregulation of interleukin-23 (p19) mRNA expression in trigeminal ganglia of BALB/c mice.</title>
        <authorList>
            <person name="Broberg E.K."/>
            <person name="Setaelae N."/>
            <person name="Eraelinna J.-P."/>
            <person name="Salmi A.A."/>
            <person name="Roeyttae M."/>
            <person name="Hukkanen V."/>
        </authorList>
    </citation>
    <scope>INDUCTION BY HERPES SIMPLEX VIRUS TYPE 1 INFECTION</scope>
</reference>
<reference key="6">
    <citation type="journal article" date="2003" name="J. Exp. Med.">
        <title>Divergent pro- and antiinflammatory roles for IL-23 and IL-12 in joint autoimmune inflammation.</title>
        <authorList>
            <person name="Murphy C.A."/>
            <person name="Langrish C.L."/>
            <person name="Chen Y."/>
            <person name="Blumenschein W."/>
            <person name="McClanahan T.K."/>
            <person name="Kastelein R.A."/>
            <person name="Sedgwick J.D."/>
            <person name="Cua D.J."/>
        </authorList>
    </citation>
    <scope>FUNCTION</scope>
    <scope>DISRUPTION PHENOTYPE</scope>
</reference>
<reference key="7">
    <citation type="journal article" date="2003" name="J. Immunol.">
        <title>Antitumor and antimetastatic activity of IL-23.</title>
        <authorList>
            <person name="Lo C.-H."/>
            <person name="Lee S.-C."/>
            <person name="Wu P.-Y."/>
            <person name="Pan W.-Y."/>
            <person name="Su J."/>
            <person name="Cheng C.-W."/>
            <person name="Roffler S.R."/>
            <person name="Chiang B.-L."/>
            <person name="Lee C.-N."/>
            <person name="Wu C.-W."/>
            <person name="Tao M.-H."/>
        </authorList>
    </citation>
    <scope>FUNCTION</scope>
</reference>
<reference key="8">
    <citation type="journal article" date="2003" name="J. Neurol. Sci.">
        <title>Differential expression and regulation of IL-23 and IL-12 subunits and receptors in adult mouse microglia.</title>
        <authorList>
            <person name="Li J."/>
            <person name="Gran B."/>
            <person name="Zhang G.-X."/>
            <person name="Ventura E.S."/>
            <person name="Siglienti I."/>
            <person name="Rostami A."/>
            <person name="Kamoun M."/>
        </authorList>
    </citation>
    <scope>INDUCTION BY LPS AND IFNG</scope>
</reference>
<reference key="9">
    <citation type="journal article" date="2003" name="Nature">
        <title>Interleukin-23 rather than interleukin-12 is the critical cytokine for autoimmune inflammation of the brain.</title>
        <authorList>
            <person name="Cua D.J."/>
            <person name="Sherlock J."/>
            <person name="Chen Y."/>
            <person name="Murphy C.A."/>
            <person name="Joyce B."/>
            <person name="Seymour B."/>
            <person name="Lucian L."/>
            <person name="To W."/>
            <person name="Kwan S."/>
            <person name="Churakova T."/>
            <person name="Zurawski S."/>
            <person name="Wiekowski M.T."/>
            <person name="Lira S.A."/>
            <person name="Gorman D."/>
            <person name="Kastelein R.A."/>
            <person name="Sedgwick J.D."/>
        </authorList>
    </citation>
    <scope>FUNCTION</scope>
    <scope>DISRUPTION PHENOTYPE</scope>
</reference>
<reference key="10">
    <citation type="journal article" date="2003" name="J. Biol. Chem.">
        <title>Interleukin-23 promotes a distinct CD4 T cell activation state characterized by the production of interleukin-17.</title>
        <authorList>
            <person name="Aggarwal S."/>
            <person name="Ghilardi N."/>
            <person name="Xie M.H."/>
            <person name="de Sauvage F.J."/>
            <person name="Gurney A.L."/>
        </authorList>
    </citation>
    <scope>FUNCTION</scope>
</reference>
<reference key="11">
    <citation type="journal article" date="2004" name="J. Immunol.">
        <title>Compromised humoral and delayed-type hypersensitivity responses in IL-23-deficient mice.</title>
        <authorList>
            <person name="Ghilardi N."/>
            <person name="Kljavin N."/>
            <person name="Chen Q."/>
            <person name="Lucas S."/>
            <person name="Gurney A.L."/>
            <person name="de Sauvage F.J."/>
        </authorList>
    </citation>
    <scope>FUNCTION</scope>
    <scope>DISRUPTION PHENOTYPE</scope>
</reference>
<reference key="12">
    <citation type="journal article" date="2005" name="J. Exp. Med.">
        <title>Divergent roles of IL-23 and IL-12 in host defense against Klebsiella pneumoniae.</title>
        <authorList>
            <person name="Happel K.I."/>
            <person name="Dubin P.J."/>
            <person name="Zheng M."/>
            <person name="Ghilardi N."/>
            <person name="Lockhart C."/>
            <person name="Quinton L.J."/>
            <person name="Odden A.R."/>
            <person name="Shellito J.E."/>
            <person name="Bagby G.J."/>
            <person name="Nelson S."/>
            <person name="Kolls J.K."/>
        </authorList>
    </citation>
    <scope>FUNCTION</scope>
    <scope>DISRUPTION PHENOTYPE</scope>
</reference>
<reference key="13">
    <citation type="journal article" date="2005" name="J. Immunol.">
        <title>Fas ligand induces cell-autonomous IL-23 production in dendritic cells, a mechanism for Fas ligand-induced IL-17 production.</title>
        <authorList>
            <person name="Kidoya H."/>
            <person name="Umemura M."/>
            <person name="Kawabe T."/>
            <person name="Matsuzaki G."/>
            <person name="Yahagi A."/>
            <person name="Imamura R."/>
            <person name="Suda T."/>
        </authorList>
    </citation>
    <scope>INDUCTION BY FASLG</scope>
</reference>
<reference key="14">
    <citation type="journal article" date="2006" name="J. Clin. Invest.">
        <title>IL-23 is essential for T cell-mediated colitis and promotes inflammation via IL-17 and IL-6.</title>
        <authorList>
            <person name="Yen D."/>
            <person name="Cheung J."/>
            <person name="Scheerens H."/>
            <person name="Poulet F."/>
            <person name="McClanahan T.K."/>
            <person name="McKenzie B."/>
            <person name="Kleinschek M.A."/>
            <person name="Owyang A."/>
            <person name="Mattson J."/>
            <person name="Blumenschein W."/>
            <person name="Murphy E."/>
            <person name="Sathe M."/>
            <person name="Cua D.J."/>
            <person name="Kastelein R.A."/>
            <person name="Rennick D.M."/>
        </authorList>
    </citation>
    <scope>FUNCTION</scope>
    <scope>DISRUPTION PHENOTYPE</scope>
</reference>
<reference key="15">
    <citation type="journal article" date="2006" name="Nature">
        <title>Transforming growth factor-beta induces development of the T(H)17 lineage.</title>
        <authorList>
            <person name="Mangan P.R."/>
            <person name="Harrington L.E."/>
            <person name="O'Quinn D.B."/>
            <person name="Helms W.S."/>
            <person name="Bullard D.C."/>
            <person name="Elson C.O."/>
            <person name="Hatton R.D."/>
            <person name="Wahl S.M."/>
            <person name="Schoeb T.R."/>
            <person name="Weaver C.T."/>
        </authorList>
    </citation>
    <scope>FUNCTION</scope>
</reference>
<reference key="16">
    <citation type="journal article" date="2006" name="Nature">
        <title>IL-23 promotes tumour incidence and growth.</title>
        <authorList>
            <person name="Langowski J.L."/>
            <person name="Zhang X."/>
            <person name="Wu L."/>
            <person name="Mattson J.D."/>
            <person name="Chen T."/>
            <person name="Smith K."/>
            <person name="Basham B."/>
            <person name="McClanahan T.K."/>
            <person name="Kastelein R.A."/>
            <person name="Oft M."/>
        </authorList>
    </citation>
    <scope>FUNCTION</scope>
</reference>
<reference key="17">
    <citation type="journal article" date="2010" name="Immunol. Lett.">
        <title>IL-23 induces receptor activator of NF-kappaB ligand expression in fibroblast-like synoviocytes via STAT3 and NF-kappaB signal pathways.</title>
        <authorList>
            <person name="Li X."/>
            <person name="Kim K.W."/>
            <person name="Cho M.L."/>
            <person name="Ju J.H."/>
            <person name="Kang C.M."/>
            <person name="Oh H.J."/>
            <person name="Min J.K."/>
            <person name="Lee S.H."/>
            <person name="Park S.H."/>
            <person name="Kim H.Y."/>
        </authorList>
    </citation>
    <scope>FUNCTION</scope>
</reference>
<protein>
    <recommendedName>
        <fullName>Interleukin-23 subunit alpha</fullName>
        <shortName>IL-23 subunit alpha</shortName>
        <shortName>IL-23-A</shortName>
    </recommendedName>
    <alternativeName>
        <fullName>Interleukin-23 subunit p19</fullName>
        <shortName>IL-23p19</shortName>
    </alternativeName>
</protein>
<sequence length="196" mass="22071">MLDCRAVIMLWLLPWVTQGLAVPRSSSPDWAQCQQLSRNLCMLAWNAHAPAGHMNLLREEEDEETKNNVPRIQCEDGCDPQGLKDNSQFCLQRIRQGLAFYKHLLDSDIFKGEPALLPDSPMEQLHTSLLGLSQLLQPEDHPRETQQMPSLSSSQQWQRPLLRSKILRSLQAFLAIAARVFAHGAATLTEPLVPTA</sequence>
<feature type="signal peptide" evidence="2">
    <location>
        <begin position="1"/>
        <end position="21"/>
    </location>
</feature>
<feature type="chain" id="PRO_0000259489" description="Interleukin-23 subunit alpha">
    <location>
        <begin position="22"/>
        <end position="196"/>
    </location>
</feature>
<comment type="function">
    <text evidence="3 4 7 8 10 11 12 14 15 16">Associates with IL12B to form the IL-23 interleukin, a heterodimeric cytokine which functions in innate and adaptive immunity. IL-23 may constitute with IL-17 an acute response to infection in peripheral tissues. IL-23 binds to a heterodimeric receptor complex composed of IL12RB1 and IL23R, activates the Jak-Stat signaling cascade, stimulates memory rather than naive T-cells and promotes production of pro-inflammatory cytokines. IL-23 induces autoimmune inflammation and thus may be responsible for autoimmune inflammatory diseases and may be important for tumorigenesis.</text>
</comment>
<comment type="function">
    <text evidence="1 3 4 7 8 10 11 12 14 15 16 17">Associates with IL12B to form the pro-inflammatory cytokine IL-23 that plays different roles in innate and adaptive immunity (PubMed:11114383, PubMed:11390512, PubMed:16670770). Released by antigen-presenting cells such as dendritic cells or macrophages, binds to a heterodimeric receptor complex composed of IL12RB1 and IL23R to activate JAK2 and TYK2 which then phosphorylate the receptor to form a docking site leading to the phosphorylation of STAT3 and STAT4 (By similarity). This process leads to activation of several pathways including p38 MAPK or NF-kappa-B and promotes the production of pro-inflammatory cytokines such as interleukin-17A/IL17A (PubMed:19900478). In turn, participates in the early and effective intracellular bacterial clearance (PubMed:16157683). Promotes the expansion and survival of T-helper 17 cells, a CD4-positive helper T-cell subset that produces IL-17, as well as other IL-17-producing cells (PubMed:16648837).</text>
</comment>
<comment type="subunit">
    <text evidence="1 3">Heterodimer with IL12B; disulfide-linked (PubMed:11114383). The heterodimer is known as interleukin IL-23 (PubMed:11114383). Interacts with IL23R; this interaction enables recruitment of IL12RB1 (By similarity).</text>
</comment>
<comment type="interaction">
    <interactant intactId="EBI-2481329">
        <id>Q9EQ14</id>
    </interactant>
    <interactant intactId="EBI-2481353">
        <id>P43432</id>
        <label>Il12b</label>
    </interactant>
    <organismsDiffer>false</organismsDiffer>
    <experiments>3</experiments>
</comment>
<comment type="interaction">
    <interactant intactId="EBI-2481329">
        <id>Q9EQ14</id>
    </interactant>
    <interactant intactId="EBI-1029614">
        <id>P29460</id>
        <label>IL12B</label>
    </interactant>
    <organismsDiffer>true</organismsDiffer>
    <experiments>2</experiments>
</comment>
<comment type="subcellular location">
    <subcellularLocation>
        <location evidence="3">Secreted</location>
    </subcellularLocation>
    <text>Secreted upon association with IL12B.</text>
</comment>
<comment type="tissue specificity">
    <text evidence="3">Secreted by activated dendritic cells (at protein level). Detected in various tissues with higher expression in polarized Th1 cells and activated macrophages.</text>
</comment>
<comment type="induction">
    <text evidence="5 6 9 13">Up-regulated in trigeminal glanglia after herpes simplex virus type 1 infection, in the lung of mice infected with mycobacteria or Klebsiella pneumoniae. Up-regulated in microglia by combined LPS and IFNG stimulation. Up-regulated by FASLG.</text>
</comment>
<comment type="disruption phenotype">
    <text evidence="7 10 11 12 15">Mice have no overt phenotype but display compromised humoral and delayed-type hypersensitivity responses. They also have impaired secretion of IL17 and IL17F, higher susceptibility to Klebsiella pneumoniae and Citrobacter rodentium infection, do not develop experimentally-induced autoimmune encephalitis a mouse model of multiple sclerosis, collagen-induced arthritis a rodent model of rheumatoid arthritis and also spontaneous colitis induced by IL10 deficiency a rodent model of inflammatory bowel disease. Transgenic mice expressing Il23a ubiquitously display multiorgan inflammation and infertility, express acute phase genes, have impaired growth and dye prematurely.</text>
</comment>
<comment type="similarity">
    <text evidence="18">Belongs to the IL-6 superfamily.</text>
</comment>
<name>IL23A_MOUSE</name>
<evidence type="ECO:0000250" key="1">
    <source>
        <dbReference type="UniProtKB" id="Q9NPF7"/>
    </source>
</evidence>
<evidence type="ECO:0000255" key="2"/>
<evidence type="ECO:0000269" key="3">
    <source>
    </source>
</evidence>
<evidence type="ECO:0000269" key="4">
    <source>
    </source>
</evidence>
<evidence type="ECO:0000269" key="5">
    <source>
    </source>
</evidence>
<evidence type="ECO:0000269" key="6">
    <source>
    </source>
</evidence>
<evidence type="ECO:0000269" key="7">
    <source>
    </source>
</evidence>
<evidence type="ECO:0000269" key="8">
    <source>
    </source>
</evidence>
<evidence type="ECO:0000269" key="9">
    <source>
    </source>
</evidence>
<evidence type="ECO:0000269" key="10">
    <source>
    </source>
</evidence>
<evidence type="ECO:0000269" key="11">
    <source>
    </source>
</evidence>
<evidence type="ECO:0000269" key="12">
    <source>
    </source>
</evidence>
<evidence type="ECO:0000269" key="13">
    <source>
    </source>
</evidence>
<evidence type="ECO:0000269" key="14">
    <source>
    </source>
</evidence>
<evidence type="ECO:0000269" key="15">
    <source>
    </source>
</evidence>
<evidence type="ECO:0000269" key="16">
    <source>
    </source>
</evidence>
<evidence type="ECO:0000269" key="17">
    <source>
    </source>
</evidence>
<evidence type="ECO:0000305" key="18"/>
<organism>
    <name type="scientific">Mus musculus</name>
    <name type="common">Mouse</name>
    <dbReference type="NCBI Taxonomy" id="10090"/>
    <lineage>
        <taxon>Eukaryota</taxon>
        <taxon>Metazoa</taxon>
        <taxon>Chordata</taxon>
        <taxon>Craniata</taxon>
        <taxon>Vertebrata</taxon>
        <taxon>Euteleostomi</taxon>
        <taxon>Mammalia</taxon>
        <taxon>Eutheria</taxon>
        <taxon>Euarchontoglires</taxon>
        <taxon>Glires</taxon>
        <taxon>Rodentia</taxon>
        <taxon>Myomorpha</taxon>
        <taxon>Muroidea</taxon>
        <taxon>Muridae</taxon>
        <taxon>Murinae</taxon>
        <taxon>Mus</taxon>
        <taxon>Mus</taxon>
    </lineage>
</organism>
<keyword id="KW-0051">Antiviral defense</keyword>
<keyword id="KW-0202">Cytokine</keyword>
<keyword id="KW-1015">Disulfide bond</keyword>
<keyword id="KW-0391">Immunity</keyword>
<keyword id="KW-0395">Inflammatory response</keyword>
<keyword id="KW-0399">Innate immunity</keyword>
<keyword id="KW-1185">Reference proteome</keyword>
<keyword id="KW-0964">Secreted</keyword>
<keyword id="KW-0732">Signal</keyword>
<keyword id="KW-0797">Tissue remodeling</keyword>
<gene>
    <name type="primary">Il23a</name>
</gene>